<reference key="1">
    <citation type="journal article" date="2009" name="Stand. Genomic Sci.">
        <title>Complete genome sequence of Methanocorpusculum labreanum type strain Z.</title>
        <authorList>
            <person name="Anderson I.J."/>
            <person name="Sieprawska-Lupa M."/>
            <person name="Goltsman E."/>
            <person name="Lapidus A."/>
            <person name="Copeland A."/>
            <person name="Glavina Del Rio T."/>
            <person name="Tice H."/>
            <person name="Dalin E."/>
            <person name="Barry K."/>
            <person name="Pitluck S."/>
            <person name="Hauser L."/>
            <person name="Land M."/>
            <person name="Lucas S."/>
            <person name="Richardson P."/>
            <person name="Whitman W.B."/>
            <person name="Kyrpides N.C."/>
        </authorList>
    </citation>
    <scope>NUCLEOTIDE SEQUENCE [LARGE SCALE GENOMIC DNA]</scope>
    <source>
        <strain>ATCC 43576 / DSM 4855 / Z</strain>
    </source>
</reference>
<protein>
    <recommendedName>
        <fullName evidence="1">tRNA pseudouridine synthase A</fullName>
        <ecNumber evidence="1">5.4.99.12</ecNumber>
    </recommendedName>
    <alternativeName>
        <fullName evidence="1">tRNA pseudouridine(38-40) synthase</fullName>
    </alternativeName>
    <alternativeName>
        <fullName evidence="1">tRNA pseudouridylate synthase I</fullName>
    </alternativeName>
    <alternativeName>
        <fullName evidence="1">tRNA-uridine isomerase I</fullName>
    </alternativeName>
</protein>
<evidence type="ECO:0000255" key="1">
    <source>
        <dbReference type="HAMAP-Rule" id="MF_00171"/>
    </source>
</evidence>
<proteinExistence type="inferred from homology"/>
<feature type="chain" id="PRO_1000017114" description="tRNA pseudouridine synthase A">
    <location>
        <begin position="1"/>
        <end position="281"/>
    </location>
</feature>
<feature type="active site" description="Nucleophile" evidence="1">
    <location>
        <position position="55"/>
    </location>
</feature>
<feature type="binding site" evidence="1">
    <location>
        <position position="110"/>
    </location>
    <ligand>
        <name>substrate</name>
    </ligand>
</feature>
<dbReference type="EC" id="5.4.99.12" evidence="1"/>
<dbReference type="EMBL" id="CP000559">
    <property type="protein sequence ID" value="ABN07836.1"/>
    <property type="molecule type" value="Genomic_DNA"/>
</dbReference>
<dbReference type="RefSeq" id="WP_011834039.1">
    <property type="nucleotide sequence ID" value="NC_008942.1"/>
</dbReference>
<dbReference type="SMR" id="A2SU30"/>
<dbReference type="STRING" id="410358.Mlab_1675"/>
<dbReference type="GeneID" id="4795731"/>
<dbReference type="KEGG" id="mla:Mlab_1675"/>
<dbReference type="eggNOG" id="arCOG04449">
    <property type="taxonomic scope" value="Archaea"/>
</dbReference>
<dbReference type="HOGENOM" id="CLU_014673_4_2_2"/>
<dbReference type="OrthoDB" id="25720at2157"/>
<dbReference type="Proteomes" id="UP000000365">
    <property type="component" value="Chromosome"/>
</dbReference>
<dbReference type="GO" id="GO:0003723">
    <property type="term" value="F:RNA binding"/>
    <property type="evidence" value="ECO:0007669"/>
    <property type="project" value="InterPro"/>
</dbReference>
<dbReference type="GO" id="GO:0160147">
    <property type="term" value="F:tRNA pseudouridine(38-40) synthase activity"/>
    <property type="evidence" value="ECO:0007669"/>
    <property type="project" value="UniProtKB-EC"/>
</dbReference>
<dbReference type="GO" id="GO:0031119">
    <property type="term" value="P:tRNA pseudouridine synthesis"/>
    <property type="evidence" value="ECO:0007669"/>
    <property type="project" value="UniProtKB-UniRule"/>
</dbReference>
<dbReference type="Gene3D" id="3.30.70.660">
    <property type="entry name" value="Pseudouridine synthase I, catalytic domain, C-terminal subdomain"/>
    <property type="match status" value="1"/>
</dbReference>
<dbReference type="Gene3D" id="3.30.70.580">
    <property type="entry name" value="Pseudouridine synthase I, catalytic domain, N-terminal subdomain"/>
    <property type="match status" value="1"/>
</dbReference>
<dbReference type="HAMAP" id="MF_00171">
    <property type="entry name" value="TruA"/>
    <property type="match status" value="1"/>
</dbReference>
<dbReference type="InterPro" id="IPR020103">
    <property type="entry name" value="PsdUridine_synth_cat_dom_sf"/>
</dbReference>
<dbReference type="InterPro" id="IPR001406">
    <property type="entry name" value="PsdUridine_synth_TruA"/>
</dbReference>
<dbReference type="InterPro" id="IPR020097">
    <property type="entry name" value="PsdUridine_synth_TruA_a/b_dom"/>
</dbReference>
<dbReference type="InterPro" id="IPR020095">
    <property type="entry name" value="PsdUridine_synth_TruA_C"/>
</dbReference>
<dbReference type="InterPro" id="IPR020094">
    <property type="entry name" value="TruA/RsuA/RluB/E/F_N"/>
</dbReference>
<dbReference type="NCBIfam" id="TIGR00071">
    <property type="entry name" value="hisT_truA"/>
    <property type="match status" value="1"/>
</dbReference>
<dbReference type="PANTHER" id="PTHR11142">
    <property type="entry name" value="PSEUDOURIDYLATE SYNTHASE"/>
    <property type="match status" value="1"/>
</dbReference>
<dbReference type="PANTHER" id="PTHR11142:SF0">
    <property type="entry name" value="TRNA PSEUDOURIDINE SYNTHASE-LIKE 1"/>
    <property type="match status" value="1"/>
</dbReference>
<dbReference type="Pfam" id="PF01416">
    <property type="entry name" value="PseudoU_synth_1"/>
    <property type="match status" value="1"/>
</dbReference>
<dbReference type="PIRSF" id="PIRSF001430">
    <property type="entry name" value="tRNA_psdUrid_synth"/>
    <property type="match status" value="1"/>
</dbReference>
<dbReference type="SUPFAM" id="SSF55120">
    <property type="entry name" value="Pseudouridine synthase"/>
    <property type="match status" value="1"/>
</dbReference>
<gene>
    <name evidence="1" type="primary">truA</name>
    <name type="ordered locus">Mlab_1675</name>
</gene>
<organism>
    <name type="scientific">Methanocorpusculum labreanum (strain ATCC 43576 / DSM 4855 / Z)</name>
    <dbReference type="NCBI Taxonomy" id="410358"/>
    <lineage>
        <taxon>Archaea</taxon>
        <taxon>Methanobacteriati</taxon>
        <taxon>Methanobacteriota</taxon>
        <taxon>Stenosarchaea group</taxon>
        <taxon>Methanomicrobia</taxon>
        <taxon>Methanomicrobiales</taxon>
        <taxon>Methanocorpusculaceae</taxon>
        <taxon>Methanocorpusculum</taxon>
    </lineage>
</organism>
<name>TRUA_METLZ</name>
<comment type="function">
    <text evidence="1">Formation of pseudouridine at positions 38, 39 and 40 in the anticodon stem and loop of transfer RNAs.</text>
</comment>
<comment type="catalytic activity">
    <reaction evidence="1">
        <text>uridine(38/39/40) in tRNA = pseudouridine(38/39/40) in tRNA</text>
        <dbReference type="Rhea" id="RHEA:22376"/>
        <dbReference type="Rhea" id="RHEA-COMP:10085"/>
        <dbReference type="Rhea" id="RHEA-COMP:10087"/>
        <dbReference type="ChEBI" id="CHEBI:65314"/>
        <dbReference type="ChEBI" id="CHEBI:65315"/>
        <dbReference type="EC" id="5.4.99.12"/>
    </reaction>
</comment>
<comment type="similarity">
    <text evidence="1">Belongs to the tRNA pseudouridine synthase TruA family.</text>
</comment>
<keyword id="KW-0413">Isomerase</keyword>
<keyword id="KW-1185">Reference proteome</keyword>
<keyword id="KW-0819">tRNA processing</keyword>
<accession>A2SU30</accession>
<sequence>MKLAFLAGYRGQNFAGSQYQPHKRTVEGEFVAGGIELGLFSDAKEAHFRTAGRTDKGVSARRQLFSITTEKPELAIEALNFHLPDDIWCIGAAEVDEEFYPRYAARERSYRYYFPYPADVSRMQDAASRLIGTHNFSGFAKMEAGRDPVRTVTRAEVFEGKDGCPVFEVAAKSFLWNMVRGMAGALQTIGLGLCEPDVIEELLSSPTARVHPAPAEGLVFWDVVCDLSFTPMRQKREVKRSLAKEAAAARADMHTAEALLEDDPEEFWKKKVIRGYSALMK</sequence>